<keyword id="KW-0002">3D-structure</keyword>
<keyword id="KW-0156">Chromatin regulator</keyword>
<keyword id="KW-0175">Coiled coil</keyword>
<keyword id="KW-0963">Cytoplasm</keyword>
<keyword id="KW-0227">DNA damage</keyword>
<keyword id="KW-0234">DNA repair</keyword>
<keyword id="KW-0539">Nucleus</keyword>
<keyword id="KW-0597">Phosphoprotein</keyword>
<keyword id="KW-1185">Reference proteome</keyword>
<feature type="chain" id="PRO_0000227715" description="DNA damage checkpoint protein LCD1">
    <location>
        <begin position="1"/>
        <end position="747"/>
    </location>
</feature>
<feature type="region of interest" description="Disordered" evidence="2">
    <location>
        <begin position="145"/>
        <end position="180"/>
    </location>
</feature>
<feature type="coiled-coil region" evidence="1">
    <location>
        <begin position="62"/>
        <end position="139"/>
    </location>
</feature>
<feature type="compositionally biased region" description="Low complexity" evidence="2">
    <location>
        <begin position="146"/>
        <end position="160"/>
    </location>
</feature>
<feature type="modified residue" description="Phosphoserine" evidence="14">
    <location>
        <position position="10"/>
    </location>
</feature>
<feature type="modified residue" description="Phosphoserine" evidence="14">
    <location>
        <position position="11"/>
    </location>
</feature>
<feature type="modified residue" description="Phosphoserine" evidence="14">
    <location>
        <position position="76"/>
    </location>
</feature>
<feature type="mutagenesis site" description="Impairs dsDNA and ssDNA binding of the MEC1-LCD1 complex." evidence="8">
    <original>K</original>
    <variation>A</variation>
    <location>
        <position position="177"/>
    </location>
</feature>
<feature type="mutagenesis site" description="Impairs dsDNA and ssDNA binding of the MEC1-LCD1 complex." evidence="8">
    <original>R</original>
    <variation>A</variation>
    <location>
        <position position="179"/>
    </location>
</feature>
<feature type="helix" evidence="17">
    <location>
        <begin position="15"/>
        <end position="20"/>
    </location>
</feature>
<feature type="helix" evidence="15">
    <location>
        <begin position="73"/>
        <end position="129"/>
    </location>
</feature>
<feature type="helix" evidence="16">
    <location>
        <begin position="202"/>
        <end position="211"/>
    </location>
</feature>
<feature type="helix" evidence="16">
    <location>
        <begin position="222"/>
        <end position="226"/>
    </location>
</feature>
<feature type="strand" evidence="16">
    <location>
        <begin position="232"/>
        <end position="235"/>
    </location>
</feature>
<feature type="strand" evidence="16">
    <location>
        <begin position="239"/>
        <end position="241"/>
    </location>
</feature>
<feature type="strand" evidence="16">
    <location>
        <begin position="246"/>
        <end position="248"/>
    </location>
</feature>
<feature type="helix" evidence="16">
    <location>
        <begin position="250"/>
        <end position="264"/>
    </location>
</feature>
<feature type="helix" evidence="16">
    <location>
        <begin position="267"/>
        <end position="286"/>
    </location>
</feature>
<feature type="helix" evidence="16">
    <location>
        <begin position="295"/>
        <end position="307"/>
    </location>
</feature>
<feature type="turn" evidence="16">
    <location>
        <begin position="311"/>
        <end position="313"/>
    </location>
</feature>
<feature type="helix" evidence="16">
    <location>
        <begin position="316"/>
        <end position="332"/>
    </location>
</feature>
<feature type="turn" evidence="16">
    <location>
        <begin position="334"/>
        <end position="337"/>
    </location>
</feature>
<feature type="strand" evidence="16">
    <location>
        <begin position="340"/>
        <end position="342"/>
    </location>
</feature>
<feature type="helix" evidence="16">
    <location>
        <begin position="356"/>
        <end position="380"/>
    </location>
</feature>
<feature type="helix" evidence="16">
    <location>
        <begin position="387"/>
        <end position="389"/>
    </location>
</feature>
<feature type="helix" evidence="16">
    <location>
        <begin position="393"/>
        <end position="406"/>
    </location>
</feature>
<feature type="strand" evidence="16">
    <location>
        <begin position="409"/>
        <end position="411"/>
    </location>
</feature>
<feature type="helix" evidence="16">
    <location>
        <begin position="415"/>
        <end position="433"/>
    </location>
</feature>
<feature type="helix" evidence="16">
    <location>
        <begin position="438"/>
        <end position="444"/>
    </location>
</feature>
<feature type="helix" evidence="16">
    <location>
        <begin position="447"/>
        <end position="461"/>
    </location>
</feature>
<feature type="helix" evidence="16">
    <location>
        <begin position="467"/>
        <end position="469"/>
    </location>
</feature>
<feature type="strand" evidence="16">
    <location>
        <begin position="470"/>
        <end position="472"/>
    </location>
</feature>
<feature type="turn" evidence="16">
    <location>
        <begin position="476"/>
        <end position="478"/>
    </location>
</feature>
<feature type="strand" evidence="16">
    <location>
        <begin position="491"/>
        <end position="493"/>
    </location>
</feature>
<feature type="helix" evidence="16">
    <location>
        <begin position="502"/>
        <end position="505"/>
    </location>
</feature>
<feature type="strand" evidence="16">
    <location>
        <begin position="510"/>
        <end position="512"/>
    </location>
</feature>
<feature type="strand" evidence="16">
    <location>
        <begin position="514"/>
        <end position="516"/>
    </location>
</feature>
<feature type="helix" evidence="16">
    <location>
        <begin position="536"/>
        <end position="562"/>
    </location>
</feature>
<feature type="strand" evidence="16">
    <location>
        <begin position="568"/>
        <end position="572"/>
    </location>
</feature>
<feature type="helix" evidence="16">
    <location>
        <begin position="573"/>
        <end position="592"/>
    </location>
</feature>
<feature type="turn" evidence="16">
    <location>
        <begin position="593"/>
        <end position="595"/>
    </location>
</feature>
<feature type="helix" evidence="16">
    <location>
        <begin position="601"/>
        <end position="621"/>
    </location>
</feature>
<feature type="helix" evidence="16">
    <location>
        <begin position="623"/>
        <end position="625"/>
    </location>
</feature>
<feature type="helix" evidence="16">
    <location>
        <begin position="628"/>
        <end position="631"/>
    </location>
</feature>
<feature type="helix" evidence="16">
    <location>
        <begin position="632"/>
        <end position="634"/>
    </location>
</feature>
<feature type="helix" evidence="16">
    <location>
        <begin position="636"/>
        <end position="646"/>
    </location>
</feature>
<feature type="helix" evidence="16">
    <location>
        <begin position="647"/>
        <end position="649"/>
    </location>
</feature>
<feature type="strand" evidence="16">
    <location>
        <begin position="655"/>
        <end position="657"/>
    </location>
</feature>
<feature type="helix" evidence="16">
    <location>
        <begin position="658"/>
        <end position="667"/>
    </location>
</feature>
<feature type="helix" evidence="16">
    <location>
        <begin position="669"/>
        <end position="680"/>
    </location>
</feature>
<feature type="strand" evidence="16">
    <location>
        <begin position="684"/>
        <end position="688"/>
    </location>
</feature>
<feature type="strand" evidence="16">
    <location>
        <begin position="691"/>
        <end position="694"/>
    </location>
</feature>
<feature type="helix" evidence="16">
    <location>
        <begin position="697"/>
        <end position="708"/>
    </location>
</feature>
<feature type="helix" evidence="16">
    <location>
        <begin position="715"/>
        <end position="725"/>
    </location>
</feature>
<feature type="helix" evidence="16">
    <location>
        <begin position="735"/>
        <end position="742"/>
    </location>
</feature>
<feature type="turn" evidence="16">
    <location>
        <begin position="743"/>
        <end position="745"/>
    </location>
</feature>
<dbReference type="EMBL" id="U33057">
    <property type="protein sequence ID" value="AAB64941.1"/>
    <property type="molecule type" value="Genomic_DNA"/>
</dbReference>
<dbReference type="EMBL" id="BK006938">
    <property type="protein sequence ID" value="DAA12331.1"/>
    <property type="molecule type" value="Genomic_DNA"/>
</dbReference>
<dbReference type="PIR" id="S69557">
    <property type="entry name" value="S69557"/>
</dbReference>
<dbReference type="RefSeq" id="NP_010787.3">
    <property type="nucleotide sequence ID" value="NM_001180807.3"/>
</dbReference>
<dbReference type="PDB" id="5OMD">
    <property type="method" value="X-ray"/>
    <property type="resolution" value="2.10 A"/>
    <property type="chains" value="A=73-136"/>
</dbReference>
<dbReference type="PDB" id="5X6O">
    <property type="method" value="EM"/>
    <property type="resolution" value="3.90 A"/>
    <property type="chains" value="G=1-747"/>
</dbReference>
<dbReference type="PDB" id="6Z2W">
    <property type="method" value="EM"/>
    <property type="resolution" value="2.82 A"/>
    <property type="chains" value="C/D=1-747"/>
</dbReference>
<dbReference type="PDB" id="6Z2X">
    <property type="method" value="EM"/>
    <property type="resolution" value="3.20 A"/>
    <property type="chains" value="C/D=1-747"/>
</dbReference>
<dbReference type="PDB" id="6Z3A">
    <property type="method" value="EM"/>
    <property type="resolution" value="3.80 A"/>
    <property type="chains" value="C/D=1-747"/>
</dbReference>
<dbReference type="PDB" id="7WZR">
    <property type="method" value="EM"/>
    <property type="resolution" value="4.70 A"/>
    <property type="chains" value="D/E=1-747"/>
</dbReference>
<dbReference type="PDB" id="7WZW">
    <property type="method" value="EM"/>
    <property type="resolution" value="3.80 A"/>
    <property type="chains" value="C/D=1-747"/>
</dbReference>
<dbReference type="PDB" id="8B4J">
    <property type="method" value="X-ray"/>
    <property type="resolution" value="1.58 A"/>
    <property type="chains" value="P=4-24"/>
</dbReference>
<dbReference type="PDBsum" id="5OMD"/>
<dbReference type="PDBsum" id="5X6O"/>
<dbReference type="PDBsum" id="6Z2W"/>
<dbReference type="PDBsum" id="6Z2X"/>
<dbReference type="PDBsum" id="6Z3A"/>
<dbReference type="PDBsum" id="7WZR"/>
<dbReference type="PDBsum" id="7WZW"/>
<dbReference type="PDBsum" id="8B4J"/>
<dbReference type="EMDB" id="EMD-11050"/>
<dbReference type="EMDB" id="EMD-11051"/>
<dbReference type="EMDB" id="EMD-11055"/>
<dbReference type="EMDB" id="EMD-32912"/>
<dbReference type="EMDB" id="EMD-32913"/>
<dbReference type="EMDB" id="EMD-6708"/>
<dbReference type="SMR" id="Q04377"/>
<dbReference type="BioGRID" id="32550">
    <property type="interactions" value="114"/>
</dbReference>
<dbReference type="ComplexPortal" id="CPX-3621">
    <property type="entry name" value="ATR-ATRIP DNA damage-sensing kinase complex"/>
</dbReference>
<dbReference type="DIP" id="DIP-2970N"/>
<dbReference type="FunCoup" id="Q04377">
    <property type="interactions" value="224"/>
</dbReference>
<dbReference type="IntAct" id="Q04377">
    <property type="interactions" value="23"/>
</dbReference>
<dbReference type="MINT" id="Q04377"/>
<dbReference type="STRING" id="4932.YDR499W"/>
<dbReference type="iPTMnet" id="Q04377"/>
<dbReference type="PaxDb" id="4932-YDR499W"/>
<dbReference type="PeptideAtlas" id="Q04377"/>
<dbReference type="EnsemblFungi" id="YDR499W_mRNA">
    <property type="protein sequence ID" value="YDR499W"/>
    <property type="gene ID" value="YDR499W"/>
</dbReference>
<dbReference type="GeneID" id="852110"/>
<dbReference type="KEGG" id="sce:YDR499W"/>
<dbReference type="AGR" id="SGD:S000002907"/>
<dbReference type="SGD" id="S000002907">
    <property type="gene designation" value="LCD1"/>
</dbReference>
<dbReference type="VEuPathDB" id="FungiDB:YDR499W"/>
<dbReference type="eggNOG" id="ENOG502QQI0">
    <property type="taxonomic scope" value="Eukaryota"/>
</dbReference>
<dbReference type="HOGENOM" id="CLU_383646_0_0_1"/>
<dbReference type="InParanoid" id="Q04377"/>
<dbReference type="OMA" id="IFQYELI"/>
<dbReference type="OrthoDB" id="4078000at2759"/>
<dbReference type="BioCyc" id="YEAST:G3O-30022-MONOMER"/>
<dbReference type="BioGRID-ORCS" id="852110">
    <property type="hits" value="3 hits in 10 CRISPR screens"/>
</dbReference>
<dbReference type="PRO" id="PR:Q04377"/>
<dbReference type="Proteomes" id="UP000002311">
    <property type="component" value="Chromosome IV"/>
</dbReference>
<dbReference type="RNAct" id="Q04377">
    <property type="molecule type" value="protein"/>
</dbReference>
<dbReference type="GO" id="GO:0070310">
    <property type="term" value="C:ATR-ATRIP complex"/>
    <property type="evidence" value="ECO:0000353"/>
    <property type="project" value="ComplexPortal"/>
</dbReference>
<dbReference type="GO" id="GO:0005737">
    <property type="term" value="C:cytoplasm"/>
    <property type="evidence" value="ECO:0007669"/>
    <property type="project" value="UniProtKB-SubCell"/>
</dbReference>
<dbReference type="GO" id="GO:0000228">
    <property type="term" value="C:nuclear chromosome"/>
    <property type="evidence" value="ECO:0000314"/>
    <property type="project" value="SGD"/>
</dbReference>
<dbReference type="GO" id="GO:0005634">
    <property type="term" value="C:nucleus"/>
    <property type="evidence" value="ECO:0007005"/>
    <property type="project" value="SGD"/>
</dbReference>
<dbReference type="GO" id="GO:0003684">
    <property type="term" value="F:damaged DNA binding"/>
    <property type="evidence" value="ECO:0000314"/>
    <property type="project" value="SGD"/>
</dbReference>
<dbReference type="GO" id="GO:0006325">
    <property type="term" value="P:chromatin organization"/>
    <property type="evidence" value="ECO:0007669"/>
    <property type="project" value="UniProtKB-KW"/>
</dbReference>
<dbReference type="GO" id="GO:0000077">
    <property type="term" value="P:DNA damage checkpoint signaling"/>
    <property type="evidence" value="ECO:0000315"/>
    <property type="project" value="SGD"/>
</dbReference>
<dbReference type="GO" id="GO:0006281">
    <property type="term" value="P:DNA repair"/>
    <property type="evidence" value="ECO:0007669"/>
    <property type="project" value="UniProtKB-KW"/>
</dbReference>
<dbReference type="GO" id="GO:0045184">
    <property type="term" value="P:establishment of protein localization"/>
    <property type="evidence" value="ECO:0000314"/>
    <property type="project" value="SGD"/>
</dbReference>
<dbReference type="GO" id="GO:0006139">
    <property type="term" value="P:nucleobase-containing compound metabolic process"/>
    <property type="evidence" value="ECO:0000303"/>
    <property type="project" value="ComplexPortal"/>
</dbReference>
<dbReference type="GO" id="GO:2000779">
    <property type="term" value="P:regulation of double-strand break repair"/>
    <property type="evidence" value="ECO:0000303"/>
    <property type="project" value="ComplexPortal"/>
</dbReference>
<dbReference type="GO" id="GO:0007004">
    <property type="term" value="P:telomere maintenance via telomerase"/>
    <property type="evidence" value="ECO:0000315"/>
    <property type="project" value="SGD"/>
</dbReference>
<dbReference type="InterPro" id="IPR018622">
    <property type="entry name" value="DNA_damage_chkpnt_Lcd1"/>
</dbReference>
<dbReference type="Pfam" id="PF09798">
    <property type="entry name" value="LCD1"/>
    <property type="match status" value="1"/>
</dbReference>
<name>LCD1_YEAST</name>
<reference key="1">
    <citation type="journal article" date="1997" name="Nature">
        <title>The nucleotide sequence of Saccharomyces cerevisiae chromosome IV.</title>
        <authorList>
            <person name="Jacq C."/>
            <person name="Alt-Moerbe J."/>
            <person name="Andre B."/>
            <person name="Arnold W."/>
            <person name="Bahr A."/>
            <person name="Ballesta J.P.G."/>
            <person name="Bargues M."/>
            <person name="Baron L."/>
            <person name="Becker A."/>
            <person name="Biteau N."/>
            <person name="Bloecker H."/>
            <person name="Blugeon C."/>
            <person name="Boskovic J."/>
            <person name="Brandt P."/>
            <person name="Brueckner M."/>
            <person name="Buitrago M.J."/>
            <person name="Coster F."/>
            <person name="Delaveau T."/>
            <person name="del Rey F."/>
            <person name="Dujon B."/>
            <person name="Eide L.G."/>
            <person name="Garcia-Cantalejo J.M."/>
            <person name="Goffeau A."/>
            <person name="Gomez-Peris A."/>
            <person name="Granotier C."/>
            <person name="Hanemann V."/>
            <person name="Hankeln T."/>
            <person name="Hoheisel J.D."/>
            <person name="Jaeger W."/>
            <person name="Jimenez A."/>
            <person name="Jonniaux J.-L."/>
            <person name="Kraemer C."/>
            <person name="Kuester H."/>
            <person name="Laamanen P."/>
            <person name="Legros Y."/>
            <person name="Louis E.J."/>
            <person name="Moeller-Rieker S."/>
            <person name="Monnet A."/>
            <person name="Moro M."/>
            <person name="Mueller-Auer S."/>
            <person name="Nussbaumer B."/>
            <person name="Paricio N."/>
            <person name="Paulin L."/>
            <person name="Perea J."/>
            <person name="Perez-Alonso M."/>
            <person name="Perez-Ortin J.E."/>
            <person name="Pohl T.M."/>
            <person name="Prydz H."/>
            <person name="Purnelle B."/>
            <person name="Rasmussen S.W."/>
            <person name="Remacha M.A."/>
            <person name="Revuelta J.L."/>
            <person name="Rieger M."/>
            <person name="Salom D."/>
            <person name="Saluz H.P."/>
            <person name="Saiz J.E."/>
            <person name="Saren A.-M."/>
            <person name="Schaefer M."/>
            <person name="Scharfe M."/>
            <person name="Schmidt E.R."/>
            <person name="Schneider C."/>
            <person name="Scholler P."/>
            <person name="Schwarz S."/>
            <person name="Soler-Mira A."/>
            <person name="Urrestarazu L.A."/>
            <person name="Verhasselt P."/>
            <person name="Vissers S."/>
            <person name="Voet M."/>
            <person name="Volckaert G."/>
            <person name="Wagner G."/>
            <person name="Wambutt R."/>
            <person name="Wedler E."/>
            <person name="Wedler H."/>
            <person name="Woelfl S."/>
            <person name="Harris D.E."/>
            <person name="Bowman S."/>
            <person name="Brown D."/>
            <person name="Churcher C.M."/>
            <person name="Connor R."/>
            <person name="Dedman K."/>
            <person name="Gentles S."/>
            <person name="Hamlin N."/>
            <person name="Hunt S."/>
            <person name="Jones L."/>
            <person name="McDonald S."/>
            <person name="Murphy L.D."/>
            <person name="Niblett D."/>
            <person name="Odell C."/>
            <person name="Oliver K."/>
            <person name="Rajandream M.A."/>
            <person name="Richards C."/>
            <person name="Shore L."/>
            <person name="Walsh S.V."/>
            <person name="Barrell B.G."/>
            <person name="Dietrich F.S."/>
            <person name="Mulligan J.T."/>
            <person name="Allen E."/>
            <person name="Araujo R."/>
            <person name="Aviles E."/>
            <person name="Berno A."/>
            <person name="Carpenter J."/>
            <person name="Chen E."/>
            <person name="Cherry J.M."/>
            <person name="Chung E."/>
            <person name="Duncan M."/>
            <person name="Hunicke-Smith S."/>
            <person name="Hyman R.W."/>
            <person name="Komp C."/>
            <person name="Lashkari D."/>
            <person name="Lew H."/>
            <person name="Lin D."/>
            <person name="Mosedale D."/>
            <person name="Nakahara K."/>
            <person name="Namath A."/>
            <person name="Oefner P."/>
            <person name="Oh C."/>
            <person name="Petel F.X."/>
            <person name="Roberts D."/>
            <person name="Schramm S."/>
            <person name="Schroeder M."/>
            <person name="Shogren T."/>
            <person name="Shroff N."/>
            <person name="Winant A."/>
            <person name="Yelton M.A."/>
            <person name="Botstein D."/>
            <person name="Davis R.W."/>
            <person name="Johnston M."/>
            <person name="Andrews S."/>
            <person name="Brinkman R."/>
            <person name="Cooper J."/>
            <person name="Ding H."/>
            <person name="Du Z."/>
            <person name="Favello A."/>
            <person name="Fulton L."/>
            <person name="Gattung S."/>
            <person name="Greco T."/>
            <person name="Hallsworth K."/>
            <person name="Hawkins J."/>
            <person name="Hillier L.W."/>
            <person name="Jier M."/>
            <person name="Johnson D."/>
            <person name="Johnston L."/>
            <person name="Kirsten J."/>
            <person name="Kucaba T."/>
            <person name="Langston Y."/>
            <person name="Latreille P."/>
            <person name="Le T."/>
            <person name="Mardis E."/>
            <person name="Menezes S."/>
            <person name="Miller N."/>
            <person name="Nhan M."/>
            <person name="Pauley A."/>
            <person name="Peluso D."/>
            <person name="Rifkin L."/>
            <person name="Riles L."/>
            <person name="Taich A."/>
            <person name="Trevaskis E."/>
            <person name="Vignati D."/>
            <person name="Wilcox L."/>
            <person name="Wohldman P."/>
            <person name="Vaudin M."/>
            <person name="Wilson R."/>
            <person name="Waterston R."/>
            <person name="Albermann K."/>
            <person name="Hani J."/>
            <person name="Heumann K."/>
            <person name="Kleine K."/>
            <person name="Mewes H.-W."/>
            <person name="Zollner A."/>
            <person name="Zaccaria P."/>
        </authorList>
    </citation>
    <scope>NUCLEOTIDE SEQUENCE [LARGE SCALE GENOMIC DNA]</scope>
    <source>
        <strain>ATCC 204508 / S288c</strain>
    </source>
</reference>
<reference key="2">
    <citation type="journal article" date="2014" name="G3 (Bethesda)">
        <title>The reference genome sequence of Saccharomyces cerevisiae: Then and now.</title>
        <authorList>
            <person name="Engel S.R."/>
            <person name="Dietrich F.S."/>
            <person name="Fisk D.G."/>
            <person name="Binkley G."/>
            <person name="Balakrishnan R."/>
            <person name="Costanzo M.C."/>
            <person name="Dwight S.S."/>
            <person name="Hitz B.C."/>
            <person name="Karra K."/>
            <person name="Nash R.S."/>
            <person name="Weng S."/>
            <person name="Wong E.D."/>
            <person name="Lloyd P."/>
            <person name="Skrzypek M.S."/>
            <person name="Miyasato S.R."/>
            <person name="Simison M."/>
            <person name="Cherry J.M."/>
        </authorList>
    </citation>
    <scope>GENOME REANNOTATION</scope>
    <source>
        <strain>ATCC 204508 / S288c</strain>
    </source>
</reference>
<reference key="3">
    <citation type="journal article" date="2000" name="EMBO J.">
        <title>LCD1: an essential gene involved in checkpoint control and regulation of the MEC1 signalling pathway in Saccharomyces cerevisiae.</title>
        <authorList>
            <person name="Rouse J."/>
            <person name="Jackson S.P."/>
        </authorList>
    </citation>
    <scope>FUNCTION</scope>
    <scope>INTERACTION WITH MEC1</scope>
</reference>
<reference key="4">
    <citation type="journal article" date="2000" name="Genes Dev.">
        <title>The checkpoint protein Ddc2, functionally related to S. pombe Rad26, interacts with Mec1 and is regulated by Mec1-dependent phosphorylation in budding yeast.</title>
        <authorList>
            <person name="Paciotti V."/>
            <person name="Clerici M."/>
            <person name="Lucchini G."/>
            <person name="Longhese M.P."/>
        </authorList>
    </citation>
    <scope>FUNCTION</scope>
    <scope>PHOSPHORYLATION</scope>
    <scope>INTERACTION WITH MEC1</scope>
</reference>
<reference key="5">
    <citation type="journal article" date="2001" name="EMBO J.">
        <title>Hyperactivation of the yeast DNA damage checkpoint by TEL1 and DDC2 overexpression.</title>
        <authorList>
            <person name="Clerici M."/>
            <person name="Paciotti V."/>
            <person name="Baldo V."/>
            <person name="Romano M."/>
            <person name="Lucchini G."/>
            <person name="Longhese M.P."/>
        </authorList>
    </citation>
    <scope>FUNCTION</scope>
</reference>
<reference key="6">
    <citation type="journal article" date="2001" name="Genes Dev.">
        <title>Two checkpoint complexes are independently recruited to sites of DNA damage in vivo.</title>
        <authorList>
            <person name="Melo J.A."/>
            <person name="Cohen J."/>
            <person name="Toczyski D.P."/>
        </authorList>
    </citation>
    <scope>SUBCELLULAR LOCATION</scope>
</reference>
<reference key="7">
    <citation type="journal article" date="2001" name="Mol. Cell. Biol.">
        <title>Pie1, a protein interacting with Mec1, controls cell growth and checkpoint responses in Saccharomyces cerevisiae.</title>
        <authorList>
            <person name="Wakayama T."/>
            <person name="Kondo T."/>
            <person name="Ando S."/>
            <person name="Matsumoto K."/>
            <person name="Sugimoto K."/>
        </authorList>
    </citation>
    <scope>FUNCTION</scope>
    <scope>INTERACTION WITH MEC1</scope>
    <scope>SUBCELLULAR LOCATION</scope>
</reference>
<reference key="8">
    <citation type="journal article" date="2001" name="Mol. Cell. Biol.">
        <title>Characterization of mec1 kinase-deficient mutants and of new hypomorphic mec1 alleles impairing subsets of the DNA damage response pathway.</title>
        <authorList>
            <person name="Paciotti V."/>
            <person name="Clerici M."/>
            <person name="Scotti M."/>
            <person name="Lucchini G."/>
            <person name="Longhese M.P."/>
        </authorList>
    </citation>
    <scope>INTERACTION WITH MEC1</scope>
    <scope>PHOSPHORYLATION BY MEC1</scope>
</reference>
<reference key="9">
    <citation type="journal article" date="2002" name="Mol. Biol. Cell">
        <title>MEC3, MEC1, and DDC2 are essential components of a telomere checkpoint pathway required for cell cycle arrest during senescence in Saccharomyces cerevisiae.</title>
        <authorList>
            <person name="Enomoto S."/>
            <person name="Glowczewski L."/>
            <person name="Berman J."/>
        </authorList>
    </citation>
    <scope>FUNCTION</scope>
</reference>
<reference key="10">
    <citation type="journal article" date="2002" name="Mol. Cell">
        <title>Lcd1p recruits Mec1p to DNA lesions in vitro and in vivo.</title>
        <authorList>
            <person name="Rouse J."/>
            <person name="Jackson S.P."/>
        </authorList>
    </citation>
    <scope>FUNCTION</scope>
    <scope>RECRUITMENT TO DNA LESIONS</scope>
    <scope>MUTAGENESIS OF LYS-177 AND ARG-179</scope>
</reference>
<reference key="11">
    <citation type="journal article" date="2003" name="Nature">
        <title>Global analysis of protein localization in budding yeast.</title>
        <authorList>
            <person name="Huh W.-K."/>
            <person name="Falvo J.V."/>
            <person name="Gerke L.C."/>
            <person name="Carroll A.S."/>
            <person name="Howson R.W."/>
            <person name="Weissman J.S."/>
            <person name="O'Shea E.K."/>
        </authorList>
    </citation>
    <scope>SUBCELLULAR LOCATION [LARGE SCALE ANALYSIS]</scope>
</reference>
<reference key="12">
    <citation type="journal article" date="2003" name="Nature">
        <title>Global analysis of protein expression in yeast.</title>
        <authorList>
            <person name="Ghaemmaghami S."/>
            <person name="Huh W.-K."/>
            <person name="Bower K."/>
            <person name="Howson R.W."/>
            <person name="Belle A."/>
            <person name="Dephoure N."/>
            <person name="O'Shea E.K."/>
            <person name="Weissman J.S."/>
        </authorList>
    </citation>
    <scope>LEVEL OF PROTEIN EXPRESSION [LARGE SCALE ANALYSIS]</scope>
</reference>
<reference key="13">
    <citation type="journal article" date="2003" name="Science">
        <title>Sensing DNA damage through ATRIP recognition of RPA-ssDNA complexes.</title>
        <authorList>
            <person name="Zou L."/>
            <person name="Elledge S.J."/>
        </authorList>
    </citation>
    <scope>RECRUITMENT TO DNA LESIONS</scope>
</reference>
<reference key="14">
    <citation type="journal article" date="2004" name="Cell">
        <title>Choreography of the DNA damage response: spatiotemporal relationships among checkpoint and repair proteins.</title>
        <authorList>
            <person name="Lisby M."/>
            <person name="Barlow J.H."/>
            <person name="Burgess R.C."/>
            <person name="Rothstein R."/>
        </authorList>
    </citation>
    <scope>FUNCTION</scope>
    <scope>SUBCELLULAR LOCATION</scope>
</reference>
<reference key="15">
    <citation type="journal article" date="2006" name="J. Biol. Chem.">
        <title>Activation of the checkpoint kinase Rad53 by the phosphatidyl inositol kinase-like kinase Mec1.</title>
        <authorList>
            <person name="Ma J.-L."/>
            <person name="Lee S.-J."/>
            <person name="Duong J.K."/>
            <person name="Stern D.F."/>
        </authorList>
    </citation>
    <scope>FUNCTION OF THE MEC1-LCD1 COMPLEX</scope>
    <scope>PHOSPHORYLATION BY MEC1</scope>
</reference>
<reference key="16">
    <citation type="journal article" date="2005" name="Mol. Biol. Cell">
        <title>Role of the C-terminus of Mec1 checkpoint kinase in its localization to sites of DNA damage.</title>
        <authorList>
            <person name="Nakada D."/>
            <person name="Hirano Y."/>
            <person name="Tanaka Y."/>
            <person name="Sugimoto K."/>
        </authorList>
    </citation>
    <scope>FUNCTION</scope>
    <scope>INTERACTION WITH MEC1</scope>
</reference>
<reference key="17">
    <citation type="journal article" date="2008" name="Mol. Cell. Proteomics">
        <title>A multidimensional chromatography technology for in-depth phosphoproteome analysis.</title>
        <authorList>
            <person name="Albuquerque C.P."/>
            <person name="Smolka M.B."/>
            <person name="Payne S.H."/>
            <person name="Bafna V."/>
            <person name="Eng J."/>
            <person name="Zhou H."/>
        </authorList>
    </citation>
    <scope>PHOSPHORYLATION [LARGE SCALE ANALYSIS] AT SER-10; SER-11 AND SER-76</scope>
    <scope>IDENTIFICATION BY MASS SPECTROMETRY [LARGE SCALE ANALYSIS]</scope>
</reference>
<reference key="18">
    <citation type="journal article" date="2009" name="Science">
        <title>Global analysis of Cdk1 substrate phosphorylation sites provides insights into evolution.</title>
        <authorList>
            <person name="Holt L.J."/>
            <person name="Tuch B.B."/>
            <person name="Villen J."/>
            <person name="Johnson A.D."/>
            <person name="Gygi S.P."/>
            <person name="Morgan D.O."/>
        </authorList>
    </citation>
    <scope>IDENTIFICATION BY MASS SPECTROMETRY [LARGE SCALE ANALYSIS]</scope>
</reference>
<organism>
    <name type="scientific">Saccharomyces cerevisiae (strain ATCC 204508 / S288c)</name>
    <name type="common">Baker's yeast</name>
    <dbReference type="NCBI Taxonomy" id="559292"/>
    <lineage>
        <taxon>Eukaryota</taxon>
        <taxon>Fungi</taxon>
        <taxon>Dikarya</taxon>
        <taxon>Ascomycota</taxon>
        <taxon>Saccharomycotina</taxon>
        <taxon>Saccharomycetes</taxon>
        <taxon>Saccharomycetales</taxon>
        <taxon>Saccharomycetaceae</taxon>
        <taxon>Saccharomyces</taxon>
    </lineage>
</organism>
<accession>Q04377</accession>
<accession>D6VTC1</accession>
<gene>
    <name type="primary">LCD1</name>
    <name type="synonym">DDC2</name>
    <name type="synonym">PIE1</name>
    <name type="ordered locus">YDR499W</name>
</gene>
<evidence type="ECO:0000255" key="1"/>
<evidence type="ECO:0000256" key="2">
    <source>
        <dbReference type="SAM" id="MobiDB-lite"/>
    </source>
</evidence>
<evidence type="ECO:0000269" key="3">
    <source>
    </source>
</evidence>
<evidence type="ECO:0000269" key="4">
    <source>
    </source>
</evidence>
<evidence type="ECO:0000269" key="5">
    <source>
    </source>
</evidence>
<evidence type="ECO:0000269" key="6">
    <source>
    </source>
</evidence>
<evidence type="ECO:0000269" key="7">
    <source>
    </source>
</evidence>
<evidence type="ECO:0000269" key="8">
    <source>
    </source>
</evidence>
<evidence type="ECO:0000269" key="9">
    <source>
    </source>
</evidence>
<evidence type="ECO:0000269" key="10">
    <source>
    </source>
</evidence>
<evidence type="ECO:0000269" key="11">
    <source>
    </source>
</evidence>
<evidence type="ECO:0000269" key="12">
    <source>
    </source>
</evidence>
<evidence type="ECO:0000269" key="13">
    <source>
    </source>
</evidence>
<evidence type="ECO:0007744" key="14">
    <source>
    </source>
</evidence>
<evidence type="ECO:0007829" key="15">
    <source>
        <dbReference type="PDB" id="5OMD"/>
    </source>
</evidence>
<evidence type="ECO:0007829" key="16">
    <source>
        <dbReference type="PDB" id="6Z2W"/>
    </source>
</evidence>
<evidence type="ECO:0007829" key="17">
    <source>
        <dbReference type="PDB" id="8B4J"/>
    </source>
</evidence>
<sequence>MRRETVGEFSSDDDDDILLELGTRPPRFTQIPPSSAALQTQIPTTLEVTTTTLNNKQSKNDNQLVNQLNKAQGEASMLRDKINFLNIEREKEKNIQAVKVNELQVKHLQELAKLKQELQKLEDEKKFLQMEARGKSKREVITNVKPPSTTLSTNTNTITPDSSSVAIEAKPQSPQSKKRKISDNLLKKNMVPLNPNRIIPDETSLFLESILLHQIIGADLSTIEILNRLKLDYITEFKFKNFVIAKGAPIGKSIVSLLLRCKKTLTLDRFIDTLLEDIAVLIKEISVHPNESKLAVPFLVALMYQIVQFRPSATHNLALKDCFLFICDLIRIYHHVLKVPIHESNMNLHVEPQIFQYELIDYLIISYSFDLLEGILRVLQSHPKQTYMEFFDENILKSFEFVYKLALTISYKPMVNVIFSAVEVVNIITSIILNMDNSSDLKSLISGSWWRDCITRLYALLEKEIKSGDVYNENVDTTTLHMSKYHDFFGLIRNIGDNELGGLISKLIYTDRLQSVPRVISKEDIGMDSDKFTAPIIGYKMEKWLLKLKDEVLNIFENLLMIYGDDATIVNGEMLIHSSKFLSREQALMIERYVGQDSPNLDLRCHLIEHTLTIIYRLWKDHFKQLREEQIKQVESQLIMSLWRFLVCQTETVTANEREMRDHRHLVDSLHDLTIKDQASYYEDAFEDLPEYIEEELKMQLNKRTGRIMQVKYDEKFQEMARTILESKSFDLTTLEEADSLYISMGL</sequence>
<proteinExistence type="evidence at protein level"/>
<protein>
    <recommendedName>
        <fullName>DNA damage checkpoint protein LCD1</fullName>
    </recommendedName>
    <alternativeName>
        <fullName>DNA damage checkpoint protein 2</fullName>
    </alternativeName>
    <alternativeName>
        <fullName>Lethal, checkpoint-defective, DNA damage-sensitive protein 1</fullName>
    </alternativeName>
</protein>
<comment type="function">
    <text evidence="3 4 5 7 8 9 11 12 13">Forms a complex with the serine/threonine kinase MEC1 which activates checkpoint signaling upon genotoxic stresses. The MEC1-LCD1 complex is recruited by the single-strand-binding protein complex RPA to DNA lesions in order to initiate the DNA repair by homologous recombination, after the MRX-complex and TEL1 are displaced. Required for the recruitment of MEC1 to DNA lesions, the activation of CHK1 and RAD53 kinases and phosphorylation of RAD9 in response to DNA damage. Required for cell growth and meiotic recombination.</text>
</comment>
<comment type="subunit">
    <text>Forms a complex with MEC1.</text>
</comment>
<comment type="interaction">
    <interactant intactId="EBI-35652">
        <id>Q04377</id>
    </interactant>
    <interactant intactId="EBI-25984">
        <id>P47027</id>
        <label>DPB11</label>
    </interactant>
    <organismsDiffer>false</organismsDiffer>
    <experiments>7</experiments>
</comment>
<comment type="interaction">
    <interactant intactId="EBI-35652">
        <id>Q04377</id>
    </interactant>
    <interactant intactId="EBI-6668">
        <id>P38111</id>
        <label>MEC1</label>
    </interactant>
    <organismsDiffer>false</organismsDiffer>
    <experiments>11</experiments>
</comment>
<comment type="subcellular location">
    <subcellularLocation>
        <location>Cytoplasm</location>
    </subcellularLocation>
    <subcellularLocation>
        <location>Nucleus</location>
    </subcellularLocation>
    <text>Localizes to nuclear DNA repair foci with other DNA repair proteins in response to DNA double strand breaks. The recruitment to DNA lesion sites requires the presence of the RPA complex on DNA.</text>
</comment>
<comment type="PTM">
    <text evidence="3 6 13">Phosphorylated by MEC1 in a cell cycle dependent manner and in response to DNA damage.</text>
</comment>
<comment type="miscellaneous">
    <text evidence="10">Present with 606 molecules/cell in log phase SD medium.</text>
</comment>